<organism>
    <name type="scientific">Arabidopsis thaliana</name>
    <name type="common">Mouse-ear cress</name>
    <dbReference type="NCBI Taxonomy" id="3702"/>
    <lineage>
        <taxon>Eukaryota</taxon>
        <taxon>Viridiplantae</taxon>
        <taxon>Streptophyta</taxon>
        <taxon>Embryophyta</taxon>
        <taxon>Tracheophyta</taxon>
        <taxon>Spermatophyta</taxon>
        <taxon>Magnoliopsida</taxon>
        <taxon>eudicotyledons</taxon>
        <taxon>Gunneridae</taxon>
        <taxon>Pentapetalae</taxon>
        <taxon>rosids</taxon>
        <taxon>malvids</taxon>
        <taxon>Brassicales</taxon>
        <taxon>Brassicaceae</taxon>
        <taxon>Camelineae</taxon>
        <taxon>Arabidopsis</taxon>
    </lineage>
</organism>
<gene>
    <name evidence="5" type="primary">PHYL1.1</name>
    <name evidence="8" type="ordered locus">At4g10170</name>
    <name evidence="9" type="ORF">F28M11.90</name>
</gene>
<dbReference type="EMBL" id="AL049487">
    <property type="protein sequence ID" value="CAB39769.1"/>
    <property type="molecule type" value="Genomic_DNA"/>
</dbReference>
<dbReference type="EMBL" id="AL161516">
    <property type="protein sequence ID" value="CAB78140.1"/>
    <property type="molecule type" value="Genomic_DNA"/>
</dbReference>
<dbReference type="EMBL" id="CP002687">
    <property type="protein sequence ID" value="AEE82850.1"/>
    <property type="molecule type" value="Genomic_DNA"/>
</dbReference>
<dbReference type="EMBL" id="CP002687">
    <property type="protein sequence ID" value="AEE82851.1"/>
    <property type="molecule type" value="Genomic_DNA"/>
</dbReference>
<dbReference type="EMBL" id="BT004609">
    <property type="protein sequence ID" value="AAO42855.1"/>
    <property type="molecule type" value="mRNA"/>
</dbReference>
<dbReference type="EMBL" id="AK227497">
    <property type="protein sequence ID" value="BAE99497.1"/>
    <property type="molecule type" value="mRNA"/>
</dbReference>
<dbReference type="PIR" id="T04067">
    <property type="entry name" value="T04067"/>
</dbReference>
<dbReference type="RefSeq" id="NP_192755.1">
    <property type="nucleotide sequence ID" value="NM_117085.5"/>
</dbReference>
<dbReference type="RefSeq" id="NP_974527.1">
    <property type="nucleotide sequence ID" value="NM_202798.2"/>
</dbReference>
<dbReference type="SMR" id="Q9SN26"/>
<dbReference type="FunCoup" id="Q9SN26">
    <property type="interactions" value="1038"/>
</dbReference>
<dbReference type="STRING" id="3702.Q9SN26"/>
<dbReference type="iPTMnet" id="Q9SN26"/>
<dbReference type="PaxDb" id="3702-AT4G10170.1"/>
<dbReference type="ProteomicsDB" id="236675"/>
<dbReference type="EnsemblPlants" id="AT4G10170.1">
    <property type="protein sequence ID" value="AT4G10170.1"/>
    <property type="gene ID" value="AT4G10170"/>
</dbReference>
<dbReference type="EnsemblPlants" id="AT4G10170.2">
    <property type="protein sequence ID" value="AT4G10170.2"/>
    <property type="gene ID" value="AT4G10170"/>
</dbReference>
<dbReference type="GeneID" id="826608"/>
<dbReference type="Gramene" id="AT4G10170.1">
    <property type="protein sequence ID" value="AT4G10170.1"/>
    <property type="gene ID" value="AT4G10170"/>
</dbReference>
<dbReference type="Gramene" id="AT4G10170.2">
    <property type="protein sequence ID" value="AT4G10170.2"/>
    <property type="gene ID" value="AT4G10170"/>
</dbReference>
<dbReference type="KEGG" id="ath:AT4G10170"/>
<dbReference type="Araport" id="AT4G10170"/>
<dbReference type="TAIR" id="AT4G10170"/>
<dbReference type="eggNOG" id="ENOG502QQFW">
    <property type="taxonomic scope" value="Eukaryota"/>
</dbReference>
<dbReference type="HOGENOM" id="CLU_088757_0_0_1"/>
<dbReference type="InParanoid" id="Q9SN26"/>
<dbReference type="OMA" id="GIWLAIC"/>
<dbReference type="OrthoDB" id="1871923at2759"/>
<dbReference type="PhylomeDB" id="Q9SN26"/>
<dbReference type="PRO" id="PR:Q9SN26"/>
<dbReference type="Proteomes" id="UP000006548">
    <property type="component" value="Chromosome 4"/>
</dbReference>
<dbReference type="ExpressionAtlas" id="Q9SN26">
    <property type="expression patterns" value="baseline and differential"/>
</dbReference>
<dbReference type="GO" id="GO:0016020">
    <property type="term" value="C:membrane"/>
    <property type="evidence" value="ECO:0007669"/>
    <property type="project" value="UniProtKB-SubCell"/>
</dbReference>
<dbReference type="GO" id="GO:0015031">
    <property type="term" value="P:protein transport"/>
    <property type="evidence" value="ECO:0007669"/>
    <property type="project" value="UniProtKB-KW"/>
</dbReference>
<dbReference type="FunFam" id="3.30.450.50:FF:000036">
    <property type="entry name" value="Phytolongin Phyl1.1"/>
    <property type="match status" value="1"/>
</dbReference>
<dbReference type="Gene3D" id="3.30.450.50">
    <property type="entry name" value="Longin domain"/>
    <property type="match status" value="1"/>
</dbReference>
<dbReference type="InterPro" id="IPR011012">
    <property type="entry name" value="Longin-like_dom_sf"/>
</dbReference>
<dbReference type="InterPro" id="IPR010908">
    <property type="entry name" value="Longin_dom"/>
</dbReference>
<dbReference type="InterPro" id="IPR044783">
    <property type="entry name" value="PHYL"/>
</dbReference>
<dbReference type="PANTHER" id="PTHR47461:SF5">
    <property type="entry name" value="PHYTOLONGIN PHYL1.1"/>
    <property type="match status" value="1"/>
</dbReference>
<dbReference type="PANTHER" id="PTHR47461">
    <property type="entry name" value="PHYTOLONGIN PHYL1.2"/>
    <property type="match status" value="1"/>
</dbReference>
<dbReference type="SMART" id="SM01270">
    <property type="entry name" value="Longin"/>
    <property type="match status" value="1"/>
</dbReference>
<dbReference type="SUPFAM" id="SSF64356">
    <property type="entry name" value="SNARE-like"/>
    <property type="match status" value="1"/>
</dbReference>
<dbReference type="PROSITE" id="PS50859">
    <property type="entry name" value="LONGIN"/>
    <property type="match status" value="1"/>
</dbReference>
<sequence>MGLIKNTVHYCCVSRDNQILYSYNGGDQTNESLAALCLEKSPPFHTWYFETIGKRRFGFLIGDGFVYFAIVDEVLKRSSVLKFLEHLRDEFKKAARENSRGSFTAMIGSINVEDQLVPVVTRLIASLERVAESSSNNELKSSNLGEQSEGSNSTKAPLLGRLSKQEKKKGKDHVIELEEHRKSNDRGNITDDSAGAGTSLEKECVSSSGRSVTQSFEWKWRRLVQIVLAIDAAICLTLFGIWLAICRGIECTRS</sequence>
<feature type="chain" id="PRO_0000434812" description="Phytolongin Phyl1.1">
    <location>
        <begin position="1"/>
        <end position="254"/>
    </location>
</feature>
<feature type="transmembrane region" description="Helical; Anchor for type IV membrane protein" evidence="2">
    <location>
        <begin position="226"/>
        <end position="246"/>
    </location>
</feature>
<feature type="domain" description="Longin" evidence="3">
    <location>
        <begin position="12"/>
        <end position="113"/>
    </location>
</feature>
<feature type="region of interest" description="Disordered" evidence="4">
    <location>
        <begin position="138"/>
        <end position="173"/>
    </location>
</feature>
<feature type="compositionally biased region" description="Polar residues" evidence="4">
    <location>
        <begin position="145"/>
        <end position="155"/>
    </location>
</feature>
<keyword id="KW-0175">Coiled coil</keyword>
<keyword id="KW-0472">Membrane</keyword>
<keyword id="KW-0653">Protein transport</keyword>
<keyword id="KW-1185">Reference proteome</keyword>
<keyword id="KW-0812">Transmembrane</keyword>
<keyword id="KW-1133">Transmembrane helix</keyword>
<keyword id="KW-0813">Transport</keyword>
<name>PHL11_ARATH</name>
<evidence type="ECO:0000250" key="1">
    <source>
        <dbReference type="UniProtKB" id="Q12255"/>
    </source>
</evidence>
<evidence type="ECO:0000255" key="2"/>
<evidence type="ECO:0000255" key="3">
    <source>
        <dbReference type="PROSITE-ProRule" id="PRU00231"/>
    </source>
</evidence>
<evidence type="ECO:0000256" key="4">
    <source>
        <dbReference type="SAM" id="MobiDB-lite"/>
    </source>
</evidence>
<evidence type="ECO:0000303" key="5">
    <source>
    </source>
</evidence>
<evidence type="ECO:0000305" key="6"/>
<evidence type="ECO:0000305" key="7">
    <source>
    </source>
</evidence>
<evidence type="ECO:0000312" key="8">
    <source>
        <dbReference type="Araport" id="AT4G10170"/>
    </source>
</evidence>
<evidence type="ECO:0000312" key="9">
    <source>
        <dbReference type="EMBL" id="CAB39769.1"/>
    </source>
</evidence>
<accession>Q9SN26</accession>
<proteinExistence type="evidence at transcript level"/>
<comment type="function">
    <text evidence="7">Non-SNARE longin protein involved in membrane-trafficking machinery.</text>
</comment>
<comment type="subcellular location">
    <subcellularLocation>
        <location evidence="2">Membrane</location>
        <topology evidence="1">Single-pass type IV membrane protein</topology>
    </subcellularLocation>
</comment>
<comment type="similarity">
    <text evidence="6">Belongs to the synaptobrevin family.</text>
</comment>
<reference key="1">
    <citation type="journal article" date="1999" name="Nature">
        <title>Sequence and analysis of chromosome 4 of the plant Arabidopsis thaliana.</title>
        <authorList>
            <person name="Mayer K.F.X."/>
            <person name="Schueller C."/>
            <person name="Wambutt R."/>
            <person name="Murphy G."/>
            <person name="Volckaert G."/>
            <person name="Pohl T."/>
            <person name="Duesterhoeft A."/>
            <person name="Stiekema W."/>
            <person name="Entian K.-D."/>
            <person name="Terryn N."/>
            <person name="Harris B."/>
            <person name="Ansorge W."/>
            <person name="Brandt P."/>
            <person name="Grivell L.A."/>
            <person name="Rieger M."/>
            <person name="Weichselgartner M."/>
            <person name="de Simone V."/>
            <person name="Obermaier B."/>
            <person name="Mache R."/>
            <person name="Mueller M."/>
            <person name="Kreis M."/>
            <person name="Delseny M."/>
            <person name="Puigdomenech P."/>
            <person name="Watson M."/>
            <person name="Schmidtheini T."/>
            <person name="Reichert B."/>
            <person name="Portetelle D."/>
            <person name="Perez-Alonso M."/>
            <person name="Boutry M."/>
            <person name="Bancroft I."/>
            <person name="Vos P."/>
            <person name="Hoheisel J."/>
            <person name="Zimmermann W."/>
            <person name="Wedler H."/>
            <person name="Ridley P."/>
            <person name="Langham S.-A."/>
            <person name="McCullagh B."/>
            <person name="Bilham L."/>
            <person name="Robben J."/>
            <person name="van der Schueren J."/>
            <person name="Grymonprez B."/>
            <person name="Chuang Y.-J."/>
            <person name="Vandenbussche F."/>
            <person name="Braeken M."/>
            <person name="Weltjens I."/>
            <person name="Voet M."/>
            <person name="Bastiaens I."/>
            <person name="Aert R."/>
            <person name="Defoor E."/>
            <person name="Weitzenegger T."/>
            <person name="Bothe G."/>
            <person name="Ramsperger U."/>
            <person name="Hilbert H."/>
            <person name="Braun M."/>
            <person name="Holzer E."/>
            <person name="Brandt A."/>
            <person name="Peters S."/>
            <person name="van Staveren M."/>
            <person name="Dirkse W."/>
            <person name="Mooijman P."/>
            <person name="Klein Lankhorst R."/>
            <person name="Rose M."/>
            <person name="Hauf J."/>
            <person name="Koetter P."/>
            <person name="Berneiser S."/>
            <person name="Hempel S."/>
            <person name="Feldpausch M."/>
            <person name="Lamberth S."/>
            <person name="Van den Daele H."/>
            <person name="De Keyser A."/>
            <person name="Buysshaert C."/>
            <person name="Gielen J."/>
            <person name="Villarroel R."/>
            <person name="De Clercq R."/>
            <person name="van Montagu M."/>
            <person name="Rogers J."/>
            <person name="Cronin A."/>
            <person name="Quail M.A."/>
            <person name="Bray-Allen S."/>
            <person name="Clark L."/>
            <person name="Doggett J."/>
            <person name="Hall S."/>
            <person name="Kay M."/>
            <person name="Lennard N."/>
            <person name="McLay K."/>
            <person name="Mayes R."/>
            <person name="Pettett A."/>
            <person name="Rajandream M.A."/>
            <person name="Lyne M."/>
            <person name="Benes V."/>
            <person name="Rechmann S."/>
            <person name="Borkova D."/>
            <person name="Bloecker H."/>
            <person name="Scharfe M."/>
            <person name="Grimm M."/>
            <person name="Loehnert T.-H."/>
            <person name="Dose S."/>
            <person name="de Haan M."/>
            <person name="Maarse A.C."/>
            <person name="Schaefer M."/>
            <person name="Mueller-Auer S."/>
            <person name="Gabel C."/>
            <person name="Fuchs M."/>
            <person name="Fartmann B."/>
            <person name="Granderath K."/>
            <person name="Dauner D."/>
            <person name="Herzl A."/>
            <person name="Neumann S."/>
            <person name="Argiriou A."/>
            <person name="Vitale D."/>
            <person name="Liguori R."/>
            <person name="Piravandi E."/>
            <person name="Massenet O."/>
            <person name="Quigley F."/>
            <person name="Clabauld G."/>
            <person name="Muendlein A."/>
            <person name="Felber R."/>
            <person name="Schnabl S."/>
            <person name="Hiller R."/>
            <person name="Schmidt W."/>
            <person name="Lecharny A."/>
            <person name="Aubourg S."/>
            <person name="Chefdor F."/>
            <person name="Cooke R."/>
            <person name="Berger C."/>
            <person name="Monfort A."/>
            <person name="Casacuberta E."/>
            <person name="Gibbons T."/>
            <person name="Weber N."/>
            <person name="Vandenbol M."/>
            <person name="Bargues M."/>
            <person name="Terol J."/>
            <person name="Torres A."/>
            <person name="Perez-Perez A."/>
            <person name="Purnelle B."/>
            <person name="Bent E."/>
            <person name="Johnson S."/>
            <person name="Tacon D."/>
            <person name="Jesse T."/>
            <person name="Heijnen L."/>
            <person name="Schwarz S."/>
            <person name="Scholler P."/>
            <person name="Heber S."/>
            <person name="Francs P."/>
            <person name="Bielke C."/>
            <person name="Frishman D."/>
            <person name="Haase D."/>
            <person name="Lemcke K."/>
            <person name="Mewes H.-W."/>
            <person name="Stocker S."/>
            <person name="Zaccaria P."/>
            <person name="Bevan M."/>
            <person name="Wilson R.K."/>
            <person name="de la Bastide M."/>
            <person name="Habermann K."/>
            <person name="Parnell L."/>
            <person name="Dedhia N."/>
            <person name="Gnoj L."/>
            <person name="Schutz K."/>
            <person name="Huang E."/>
            <person name="Spiegel L."/>
            <person name="Sekhon M."/>
            <person name="Murray J."/>
            <person name="Sheet P."/>
            <person name="Cordes M."/>
            <person name="Abu-Threideh J."/>
            <person name="Stoneking T."/>
            <person name="Kalicki J."/>
            <person name="Graves T."/>
            <person name="Harmon G."/>
            <person name="Edwards J."/>
            <person name="Latreille P."/>
            <person name="Courtney L."/>
            <person name="Cloud J."/>
            <person name="Abbott A."/>
            <person name="Scott K."/>
            <person name="Johnson D."/>
            <person name="Minx P."/>
            <person name="Bentley D."/>
            <person name="Fulton B."/>
            <person name="Miller N."/>
            <person name="Greco T."/>
            <person name="Kemp K."/>
            <person name="Kramer J."/>
            <person name="Fulton L."/>
            <person name="Mardis E."/>
            <person name="Dante M."/>
            <person name="Pepin K."/>
            <person name="Hillier L.W."/>
            <person name="Nelson J."/>
            <person name="Spieth J."/>
            <person name="Ryan E."/>
            <person name="Andrews S."/>
            <person name="Geisel C."/>
            <person name="Layman D."/>
            <person name="Du H."/>
            <person name="Ali J."/>
            <person name="Berghoff A."/>
            <person name="Jones K."/>
            <person name="Drone K."/>
            <person name="Cotton M."/>
            <person name="Joshu C."/>
            <person name="Antonoiu B."/>
            <person name="Zidanic M."/>
            <person name="Strong C."/>
            <person name="Sun H."/>
            <person name="Lamar B."/>
            <person name="Yordan C."/>
            <person name="Ma P."/>
            <person name="Zhong J."/>
            <person name="Preston R."/>
            <person name="Vil D."/>
            <person name="Shekher M."/>
            <person name="Matero A."/>
            <person name="Shah R."/>
            <person name="Swaby I.K."/>
            <person name="O'Shaughnessy A."/>
            <person name="Rodriguez M."/>
            <person name="Hoffman J."/>
            <person name="Till S."/>
            <person name="Granat S."/>
            <person name="Shohdy N."/>
            <person name="Hasegawa A."/>
            <person name="Hameed A."/>
            <person name="Lodhi M."/>
            <person name="Johnson A."/>
            <person name="Chen E."/>
            <person name="Marra M.A."/>
            <person name="Martienssen R."/>
            <person name="McCombie W.R."/>
        </authorList>
    </citation>
    <scope>NUCLEOTIDE SEQUENCE [LARGE SCALE GENOMIC DNA]</scope>
    <source>
        <strain>cv. Columbia</strain>
    </source>
</reference>
<reference key="2">
    <citation type="journal article" date="2017" name="Plant J.">
        <title>Araport11: a complete reannotation of the Arabidopsis thaliana reference genome.</title>
        <authorList>
            <person name="Cheng C.Y."/>
            <person name="Krishnakumar V."/>
            <person name="Chan A.P."/>
            <person name="Thibaud-Nissen F."/>
            <person name="Schobel S."/>
            <person name="Town C.D."/>
        </authorList>
    </citation>
    <scope>GENOME REANNOTATION</scope>
    <source>
        <strain>cv. Columbia</strain>
    </source>
</reference>
<reference key="3">
    <citation type="journal article" date="2003" name="Science">
        <title>Empirical analysis of transcriptional activity in the Arabidopsis genome.</title>
        <authorList>
            <person name="Yamada K."/>
            <person name="Lim J."/>
            <person name="Dale J.M."/>
            <person name="Chen H."/>
            <person name="Shinn P."/>
            <person name="Palm C.J."/>
            <person name="Southwick A.M."/>
            <person name="Wu H.C."/>
            <person name="Kim C.J."/>
            <person name="Nguyen M."/>
            <person name="Pham P.K."/>
            <person name="Cheuk R.F."/>
            <person name="Karlin-Newmann G."/>
            <person name="Liu S.X."/>
            <person name="Lam B."/>
            <person name="Sakano H."/>
            <person name="Wu T."/>
            <person name="Yu G."/>
            <person name="Miranda M."/>
            <person name="Quach H.L."/>
            <person name="Tripp M."/>
            <person name="Chang C.H."/>
            <person name="Lee J.M."/>
            <person name="Toriumi M.J."/>
            <person name="Chan M.M."/>
            <person name="Tang C.C."/>
            <person name="Onodera C.S."/>
            <person name="Deng J.M."/>
            <person name="Akiyama K."/>
            <person name="Ansari Y."/>
            <person name="Arakawa T."/>
            <person name="Banh J."/>
            <person name="Banno F."/>
            <person name="Bowser L."/>
            <person name="Brooks S.Y."/>
            <person name="Carninci P."/>
            <person name="Chao Q."/>
            <person name="Choy N."/>
            <person name="Enju A."/>
            <person name="Goldsmith A.D."/>
            <person name="Gurjal M."/>
            <person name="Hansen N.F."/>
            <person name="Hayashizaki Y."/>
            <person name="Johnson-Hopson C."/>
            <person name="Hsuan V.W."/>
            <person name="Iida K."/>
            <person name="Karnes M."/>
            <person name="Khan S."/>
            <person name="Koesema E."/>
            <person name="Ishida J."/>
            <person name="Jiang P.X."/>
            <person name="Jones T."/>
            <person name="Kawai J."/>
            <person name="Kamiya A."/>
            <person name="Meyers C."/>
            <person name="Nakajima M."/>
            <person name="Narusaka M."/>
            <person name="Seki M."/>
            <person name="Sakurai T."/>
            <person name="Satou M."/>
            <person name="Tamse R."/>
            <person name="Vaysberg M."/>
            <person name="Wallender E.K."/>
            <person name="Wong C."/>
            <person name="Yamamura Y."/>
            <person name="Yuan S."/>
            <person name="Shinozaki K."/>
            <person name="Davis R.W."/>
            <person name="Theologis A."/>
            <person name="Ecker J.R."/>
        </authorList>
    </citation>
    <scope>NUCLEOTIDE SEQUENCE [LARGE SCALE MRNA]</scope>
    <source>
        <strain>cv. Columbia</strain>
    </source>
</reference>
<reference key="4">
    <citation type="submission" date="2006-07" db="EMBL/GenBank/DDBJ databases">
        <title>Large-scale analysis of RIKEN Arabidopsis full-length (RAFL) cDNAs.</title>
        <authorList>
            <person name="Totoki Y."/>
            <person name="Seki M."/>
            <person name="Ishida J."/>
            <person name="Nakajima M."/>
            <person name="Enju A."/>
            <person name="Kamiya A."/>
            <person name="Narusaka M."/>
            <person name="Shin-i T."/>
            <person name="Nakagawa M."/>
            <person name="Sakamoto N."/>
            <person name="Oishi K."/>
            <person name="Kohara Y."/>
            <person name="Kobayashi M."/>
            <person name="Toyoda A."/>
            <person name="Sakaki Y."/>
            <person name="Sakurai T."/>
            <person name="Iida K."/>
            <person name="Akiyama K."/>
            <person name="Satou M."/>
            <person name="Toyoda T."/>
            <person name="Konagaya A."/>
            <person name="Carninci P."/>
            <person name="Kawai J."/>
            <person name="Hayashizaki Y."/>
            <person name="Shinozaki K."/>
        </authorList>
    </citation>
    <scope>NUCLEOTIDE SEQUENCE [LARGE SCALE MRNA]</scope>
    <source>
        <strain>cv. Columbia</strain>
    </source>
</reference>
<reference key="5">
    <citation type="journal article" date="2009" name="BMC Genomics">
        <title>Comparative analysis of plant genomes allows the definition of the 'Phytolongins': a novel non-SNARE longin domain protein family.</title>
        <authorList>
            <person name="Vedovato M."/>
            <person name="Rossi V."/>
            <person name="Dacks J.B."/>
            <person name="Filippini F."/>
        </authorList>
    </citation>
    <scope>FUNCTION</scope>
    <scope>GENE FAMILY</scope>
    <scope>NOMENCLATURE</scope>
    <scope>3D-STRUCTURE MODELING</scope>
</reference>
<protein>
    <recommendedName>
        <fullName evidence="5">Phytolongin Phyl1.1</fullName>
    </recommendedName>
</protein>